<comment type="function">
    <text evidence="1">RAB2B effector protein required for accurate acrosome formation and normal male fertility. In complex with RAB2A/RAB2B, seems to suppress excessive vesicle trafficking during acrosome formation.</text>
</comment>
<comment type="subcellular location">
    <subcellularLocation>
        <location evidence="1">Golgi apparatus</location>
    </subcellularLocation>
</comment>
<comment type="similarity">
    <text evidence="3">Belongs to the GARIN family.</text>
</comment>
<feature type="chain" id="PRO_0000311686" description="Golgi-associated RAB2 interactor protein 1B">
    <location>
        <begin position="1"/>
        <end position="345"/>
    </location>
</feature>
<feature type="region of interest" description="Disordered" evidence="2">
    <location>
        <begin position="222"/>
        <end position="241"/>
    </location>
</feature>
<feature type="region of interest" description="Disordered" evidence="2">
    <location>
        <begin position="271"/>
        <end position="299"/>
    </location>
</feature>
<feature type="compositionally biased region" description="Basic and acidic residues" evidence="2">
    <location>
        <begin position="275"/>
        <end position="285"/>
    </location>
</feature>
<dbReference type="EMBL" id="BC112564">
    <property type="protein sequence ID" value="AAI12565.1"/>
    <property type="molecule type" value="mRNA"/>
</dbReference>
<dbReference type="RefSeq" id="NP_001039922.1">
    <property type="nucleotide sequence ID" value="NM_001046457.2"/>
</dbReference>
<dbReference type="RefSeq" id="XP_024846599.1">
    <property type="nucleotide sequence ID" value="XM_024990831.2"/>
</dbReference>
<dbReference type="FunCoup" id="Q2KIP3">
    <property type="interactions" value="25"/>
</dbReference>
<dbReference type="STRING" id="9913.ENSBTAP00000073841"/>
<dbReference type="PaxDb" id="9913-ENSBTAP00000013015"/>
<dbReference type="Ensembl" id="ENSBTAT00000013015.4">
    <property type="protein sequence ID" value="ENSBTAP00000013015.3"/>
    <property type="gene ID" value="ENSBTAG00000009867.5"/>
</dbReference>
<dbReference type="GeneID" id="539444"/>
<dbReference type="KEGG" id="bta:539444"/>
<dbReference type="CTD" id="84691"/>
<dbReference type="VEuPathDB" id="HostDB:ENSBTAG00000009867"/>
<dbReference type="VGNC" id="VGNC:50157">
    <property type="gene designation" value="GARIN1B"/>
</dbReference>
<dbReference type="eggNOG" id="ENOG502S7XV">
    <property type="taxonomic scope" value="Eukaryota"/>
</dbReference>
<dbReference type="GeneTree" id="ENSGT00940000161477"/>
<dbReference type="HOGENOM" id="CLU_069391_0_0_1"/>
<dbReference type="InParanoid" id="Q2KIP3"/>
<dbReference type="OMA" id="VCDHLQR"/>
<dbReference type="OrthoDB" id="9826157at2759"/>
<dbReference type="TreeFam" id="TF336050"/>
<dbReference type="Proteomes" id="UP000009136">
    <property type="component" value="Chromosome 4"/>
</dbReference>
<dbReference type="Bgee" id="ENSBTAG00000009867">
    <property type="expression patterns" value="Expressed in semen and 33 other cell types or tissues"/>
</dbReference>
<dbReference type="GO" id="GO:0005794">
    <property type="term" value="C:Golgi apparatus"/>
    <property type="evidence" value="ECO:0000250"/>
    <property type="project" value="UniProtKB"/>
</dbReference>
<dbReference type="GO" id="GO:0001675">
    <property type="term" value="P:acrosome assembly"/>
    <property type="evidence" value="ECO:0000250"/>
    <property type="project" value="UniProtKB"/>
</dbReference>
<dbReference type="GO" id="GO:0007340">
    <property type="term" value="P:acrosome reaction"/>
    <property type="evidence" value="ECO:0000250"/>
    <property type="project" value="UniProtKB"/>
</dbReference>
<dbReference type="InterPro" id="IPR022168">
    <property type="entry name" value="GARIL-like_Rab2B-bd"/>
</dbReference>
<dbReference type="PANTHER" id="PTHR22574">
    <property type="match status" value="1"/>
</dbReference>
<dbReference type="PANTHER" id="PTHR22574:SF13">
    <property type="entry name" value="GOLGI-ASSOCIATED RAB2 INTERACTOR PROTEIN 1B"/>
    <property type="match status" value="1"/>
</dbReference>
<dbReference type="Pfam" id="PF12480">
    <property type="entry name" value="GARIL_Rab2_bd"/>
    <property type="match status" value="1"/>
</dbReference>
<sequence>MLSSVPHRKTWNKSKKTVKVTRSYPTFPSLNAWEEFRGLFPVDGEPNPGVGLGVEEGLLGQMVHSPEFNLFPESVVFESNFVQVRKGRDWIDIYKTYNTMALGVTSSVPCLPLPNILLMASVKWHHGQNQTWNKPSTAPKIILKRILPLKFVELQVSDHLQRVLRLRTVTEKIYYLKLHPDHPKTVFHFWIRLIQILQKGLSITTKDPRILVTHCLVPKNSCSPSGDSQLVQKKPQASQPSESLMQLMAKGESEALCQIFVDLHQHNLFSSRSSKKTENKKDSSGKKTSPSEDSIPCTRDLSWRDSFTYGEWERENPSGPQSLSLLSTLAASTGPQLAPLIGSSI</sequence>
<accession>Q2KIP3</accession>
<organism>
    <name type="scientific">Bos taurus</name>
    <name type="common">Bovine</name>
    <dbReference type="NCBI Taxonomy" id="9913"/>
    <lineage>
        <taxon>Eukaryota</taxon>
        <taxon>Metazoa</taxon>
        <taxon>Chordata</taxon>
        <taxon>Craniata</taxon>
        <taxon>Vertebrata</taxon>
        <taxon>Euteleostomi</taxon>
        <taxon>Mammalia</taxon>
        <taxon>Eutheria</taxon>
        <taxon>Laurasiatheria</taxon>
        <taxon>Artiodactyla</taxon>
        <taxon>Ruminantia</taxon>
        <taxon>Pecora</taxon>
        <taxon>Bovidae</taxon>
        <taxon>Bovinae</taxon>
        <taxon>Bos</taxon>
    </lineage>
</organism>
<evidence type="ECO:0000250" key="1">
    <source>
        <dbReference type="UniProtKB" id="Q3UZD7"/>
    </source>
</evidence>
<evidence type="ECO:0000256" key="2">
    <source>
        <dbReference type="SAM" id="MobiDB-lite"/>
    </source>
</evidence>
<evidence type="ECO:0000305" key="3"/>
<protein>
    <recommendedName>
        <fullName>Golgi-associated RAB2 interactor protein 1B</fullName>
    </recommendedName>
</protein>
<gene>
    <name type="primary">GARIN1B</name>
    <name type="synonym">FAM137A</name>
    <name type="synonym">FAM71F1</name>
</gene>
<reference key="1">
    <citation type="submission" date="2006-01" db="EMBL/GenBank/DDBJ databases">
        <authorList>
            <consortium name="NIH - Mammalian Gene Collection (MGC) project"/>
        </authorList>
    </citation>
    <scope>NUCLEOTIDE SEQUENCE [LARGE SCALE MRNA]</scope>
    <source>
        <strain>Hereford</strain>
        <tissue>Testis</tissue>
    </source>
</reference>
<keyword id="KW-0333">Golgi apparatus</keyword>
<keyword id="KW-1185">Reference proteome</keyword>
<name>GAR1B_BOVIN</name>
<proteinExistence type="evidence at transcript level"/>